<accession>A1JT80</accession>
<reference key="1">
    <citation type="journal article" date="2006" name="PLoS Genet.">
        <title>The complete genome sequence and comparative genome analysis of the high pathogenicity Yersinia enterocolitica strain 8081.</title>
        <authorList>
            <person name="Thomson N.R."/>
            <person name="Howard S."/>
            <person name="Wren B.W."/>
            <person name="Holden M.T.G."/>
            <person name="Crossman L."/>
            <person name="Challis G.L."/>
            <person name="Churcher C."/>
            <person name="Mungall K."/>
            <person name="Brooks K."/>
            <person name="Chillingworth T."/>
            <person name="Feltwell T."/>
            <person name="Abdellah Z."/>
            <person name="Hauser H."/>
            <person name="Jagels K."/>
            <person name="Maddison M."/>
            <person name="Moule S."/>
            <person name="Sanders M."/>
            <person name="Whitehead S."/>
            <person name="Quail M.A."/>
            <person name="Dougan G."/>
            <person name="Parkhill J."/>
            <person name="Prentice M.B."/>
        </authorList>
    </citation>
    <scope>NUCLEOTIDE SEQUENCE [LARGE SCALE GENOMIC DNA]</scope>
    <source>
        <strain>NCTC 13174 / 8081</strain>
    </source>
</reference>
<dbReference type="EMBL" id="AM286415">
    <property type="protein sequence ID" value="CAL14189.1"/>
    <property type="molecule type" value="Genomic_DNA"/>
</dbReference>
<dbReference type="RefSeq" id="WP_005161100.1">
    <property type="nucleotide sequence ID" value="NC_008800.1"/>
</dbReference>
<dbReference type="RefSeq" id="YP_001008307.1">
    <property type="nucleotide sequence ID" value="NC_008800.1"/>
</dbReference>
<dbReference type="BMRB" id="A1JT80"/>
<dbReference type="SMR" id="A1JT80"/>
<dbReference type="GeneID" id="31410972"/>
<dbReference type="KEGG" id="yen:YE4173"/>
<dbReference type="PATRIC" id="fig|393305.7.peg.4441"/>
<dbReference type="eggNOG" id="COG0593">
    <property type="taxonomic scope" value="Bacteria"/>
</dbReference>
<dbReference type="HOGENOM" id="CLU_026910_0_1_6"/>
<dbReference type="OrthoDB" id="9807019at2"/>
<dbReference type="Proteomes" id="UP000000642">
    <property type="component" value="Chromosome"/>
</dbReference>
<dbReference type="GO" id="GO:0005737">
    <property type="term" value="C:cytoplasm"/>
    <property type="evidence" value="ECO:0007669"/>
    <property type="project" value="UniProtKB-SubCell"/>
</dbReference>
<dbReference type="GO" id="GO:0005886">
    <property type="term" value="C:plasma membrane"/>
    <property type="evidence" value="ECO:0007669"/>
    <property type="project" value="TreeGrafter"/>
</dbReference>
<dbReference type="GO" id="GO:0005524">
    <property type="term" value="F:ATP binding"/>
    <property type="evidence" value="ECO:0007669"/>
    <property type="project" value="UniProtKB-UniRule"/>
</dbReference>
<dbReference type="GO" id="GO:0016887">
    <property type="term" value="F:ATP hydrolysis activity"/>
    <property type="evidence" value="ECO:0007669"/>
    <property type="project" value="InterPro"/>
</dbReference>
<dbReference type="GO" id="GO:0003688">
    <property type="term" value="F:DNA replication origin binding"/>
    <property type="evidence" value="ECO:0007669"/>
    <property type="project" value="UniProtKB-UniRule"/>
</dbReference>
<dbReference type="GO" id="GO:0008289">
    <property type="term" value="F:lipid binding"/>
    <property type="evidence" value="ECO:0007669"/>
    <property type="project" value="UniProtKB-KW"/>
</dbReference>
<dbReference type="GO" id="GO:0006270">
    <property type="term" value="P:DNA replication initiation"/>
    <property type="evidence" value="ECO:0007669"/>
    <property type="project" value="UniProtKB-UniRule"/>
</dbReference>
<dbReference type="GO" id="GO:0006275">
    <property type="term" value="P:regulation of DNA replication"/>
    <property type="evidence" value="ECO:0007669"/>
    <property type="project" value="UniProtKB-UniRule"/>
</dbReference>
<dbReference type="CDD" id="cd00009">
    <property type="entry name" value="AAA"/>
    <property type="match status" value="1"/>
</dbReference>
<dbReference type="CDD" id="cd06571">
    <property type="entry name" value="Bac_DnaA_C"/>
    <property type="match status" value="1"/>
</dbReference>
<dbReference type="FunFam" id="1.10.1750.10:FF:000001">
    <property type="entry name" value="Chromosomal replication initiator protein DnaA"/>
    <property type="match status" value="1"/>
</dbReference>
<dbReference type="FunFam" id="1.10.8.60:FF:000003">
    <property type="entry name" value="Chromosomal replication initiator protein DnaA"/>
    <property type="match status" value="1"/>
</dbReference>
<dbReference type="FunFam" id="3.30.300.180:FF:000001">
    <property type="entry name" value="Chromosomal replication initiator protein DnaA"/>
    <property type="match status" value="1"/>
</dbReference>
<dbReference type="FunFam" id="3.40.50.300:FF:000103">
    <property type="entry name" value="Chromosomal replication initiator protein DnaA"/>
    <property type="match status" value="1"/>
</dbReference>
<dbReference type="Gene3D" id="1.10.1750.10">
    <property type="match status" value="1"/>
</dbReference>
<dbReference type="Gene3D" id="1.10.8.60">
    <property type="match status" value="1"/>
</dbReference>
<dbReference type="Gene3D" id="3.30.300.180">
    <property type="match status" value="1"/>
</dbReference>
<dbReference type="Gene3D" id="3.40.50.300">
    <property type="entry name" value="P-loop containing nucleotide triphosphate hydrolases"/>
    <property type="match status" value="1"/>
</dbReference>
<dbReference type="HAMAP" id="MF_00377">
    <property type="entry name" value="DnaA_bact"/>
    <property type="match status" value="1"/>
</dbReference>
<dbReference type="InterPro" id="IPR003593">
    <property type="entry name" value="AAA+_ATPase"/>
</dbReference>
<dbReference type="InterPro" id="IPR001957">
    <property type="entry name" value="Chromosome_initiator_DnaA"/>
</dbReference>
<dbReference type="InterPro" id="IPR020591">
    <property type="entry name" value="Chromosome_initiator_DnaA-like"/>
</dbReference>
<dbReference type="InterPro" id="IPR018312">
    <property type="entry name" value="Chromosome_initiator_DnaA_CS"/>
</dbReference>
<dbReference type="InterPro" id="IPR013159">
    <property type="entry name" value="DnaA_C"/>
</dbReference>
<dbReference type="InterPro" id="IPR013317">
    <property type="entry name" value="DnaA_dom"/>
</dbReference>
<dbReference type="InterPro" id="IPR024633">
    <property type="entry name" value="DnaA_N_dom"/>
</dbReference>
<dbReference type="InterPro" id="IPR038454">
    <property type="entry name" value="DnaA_N_sf"/>
</dbReference>
<dbReference type="InterPro" id="IPR027417">
    <property type="entry name" value="P-loop_NTPase"/>
</dbReference>
<dbReference type="InterPro" id="IPR010921">
    <property type="entry name" value="Trp_repressor/repl_initiator"/>
</dbReference>
<dbReference type="NCBIfam" id="TIGR00362">
    <property type="entry name" value="DnaA"/>
    <property type="match status" value="1"/>
</dbReference>
<dbReference type="PANTHER" id="PTHR30050">
    <property type="entry name" value="CHROMOSOMAL REPLICATION INITIATOR PROTEIN DNAA"/>
    <property type="match status" value="1"/>
</dbReference>
<dbReference type="PANTHER" id="PTHR30050:SF2">
    <property type="entry name" value="CHROMOSOMAL REPLICATION INITIATOR PROTEIN DNAA"/>
    <property type="match status" value="1"/>
</dbReference>
<dbReference type="Pfam" id="PF00308">
    <property type="entry name" value="Bac_DnaA"/>
    <property type="match status" value="1"/>
</dbReference>
<dbReference type="Pfam" id="PF08299">
    <property type="entry name" value="Bac_DnaA_C"/>
    <property type="match status" value="1"/>
</dbReference>
<dbReference type="Pfam" id="PF11638">
    <property type="entry name" value="DnaA_N"/>
    <property type="match status" value="1"/>
</dbReference>
<dbReference type="PRINTS" id="PR00051">
    <property type="entry name" value="DNAA"/>
</dbReference>
<dbReference type="SMART" id="SM00382">
    <property type="entry name" value="AAA"/>
    <property type="match status" value="1"/>
</dbReference>
<dbReference type="SMART" id="SM00760">
    <property type="entry name" value="Bac_DnaA_C"/>
    <property type="match status" value="1"/>
</dbReference>
<dbReference type="SUPFAM" id="SSF52540">
    <property type="entry name" value="P-loop containing nucleoside triphosphate hydrolases"/>
    <property type="match status" value="1"/>
</dbReference>
<dbReference type="SUPFAM" id="SSF48295">
    <property type="entry name" value="TrpR-like"/>
    <property type="match status" value="1"/>
</dbReference>
<dbReference type="PROSITE" id="PS01008">
    <property type="entry name" value="DNAA"/>
    <property type="match status" value="1"/>
</dbReference>
<comment type="function">
    <text evidence="1">Plays an essential role in the initiation and regulation of chromosomal replication. ATP-DnaA binds to the origin of replication (oriC) to initiate formation of the DNA replication initiation complex once per cell cycle. Binds the DnaA box (a 9 base pair repeat at the origin) and separates the double-stranded (ds)DNA. Forms a right-handed helical filament on oriC DNA; dsDNA binds to the exterior of the filament while single-stranded (ss)DNA is stabiized in the filament's interior. The ATP-DnaA-oriC complex binds and stabilizes one strand of the AT-rich DNA unwinding element (DUE), permitting loading of DNA polymerase. After initiation quickly degrades to an ADP-DnaA complex that is not apt for DNA replication. Binds acidic phospholipids.</text>
</comment>
<comment type="subunit">
    <text evidence="1">Oligomerizes as a right-handed, spiral filament on DNA at oriC.</text>
</comment>
<comment type="subcellular location">
    <subcellularLocation>
        <location evidence="1">Cytoplasm</location>
    </subcellularLocation>
</comment>
<comment type="domain">
    <text evidence="1">Domain I is involved in oligomerization and binding regulators, domain II is flexibile and of varying length in different bacteria, domain III forms the AAA+ region, while domain IV binds dsDNA.</text>
</comment>
<comment type="similarity">
    <text evidence="1">Belongs to the DnaA family.</text>
</comment>
<gene>
    <name evidence="1" type="primary">dnaA</name>
    <name type="ordered locus">YE4173</name>
</gene>
<sequence length="462" mass="52127">MSLSLWQQCLARLQDELPATEFSMWIRPLQAELSDNTLALYAPNRFVLDWVRDKYLNNINGLLNDFCGSEVPLLRFEVGSKPAVRAHSHPVTASVSAPVAPVTRSAPVRPSWDSSPAQPELSYRSNVNPKHTFDNFVEGKSNQLARAAARQVADNPGGAYNPLFLYGGTGLGKTHLLHAVGNGIMARKANAKVVYMHSERFVQDMVKALQNNAIEEFKRYYRSVDALLIDDIQFFANKERSQEEFFHTFNALLEGNQQIILTSDRYPKEINGVEDRLKSRFGWGLTVAIEPPELETRVAILMKKADENDIRLPGEVAFFIAKRLRSNVRELEGALNRVIANANFTGRAITIDFVREALRDLLALQEKLVTIDNIQKTVAEYYKIKVADLLSKRRSRSVARPRQMAMALAKELTNHSLPEIGDAFGGRDHTTVLHACRKIEQLREESHDIKEDFSNLIRTLSS</sequence>
<protein>
    <recommendedName>
        <fullName evidence="1">Chromosomal replication initiator protein DnaA</fullName>
    </recommendedName>
</protein>
<name>DNAA_YERE8</name>
<organism>
    <name type="scientific">Yersinia enterocolitica serotype O:8 / biotype 1B (strain NCTC 13174 / 8081)</name>
    <dbReference type="NCBI Taxonomy" id="393305"/>
    <lineage>
        <taxon>Bacteria</taxon>
        <taxon>Pseudomonadati</taxon>
        <taxon>Pseudomonadota</taxon>
        <taxon>Gammaproteobacteria</taxon>
        <taxon>Enterobacterales</taxon>
        <taxon>Yersiniaceae</taxon>
        <taxon>Yersinia</taxon>
    </lineage>
</organism>
<proteinExistence type="inferred from homology"/>
<feature type="chain" id="PRO_1000048760" description="Chromosomal replication initiator protein DnaA">
    <location>
        <begin position="1"/>
        <end position="462"/>
    </location>
</feature>
<feature type="region of interest" description="Domain I, interacts with DnaA modulators" evidence="1">
    <location>
        <begin position="1"/>
        <end position="83"/>
    </location>
</feature>
<feature type="region of interest" description="Domain II" evidence="1">
    <location>
        <begin position="83"/>
        <end position="125"/>
    </location>
</feature>
<feature type="region of interest" description="Disordered" evidence="2">
    <location>
        <begin position="105"/>
        <end position="127"/>
    </location>
</feature>
<feature type="region of interest" description="Domain III, AAA+ region" evidence="1">
    <location>
        <begin position="126"/>
        <end position="342"/>
    </location>
</feature>
<feature type="region of interest" description="Domain IV, binds dsDNA" evidence="1">
    <location>
        <begin position="343"/>
        <end position="462"/>
    </location>
</feature>
<feature type="compositionally biased region" description="Polar residues" evidence="2">
    <location>
        <begin position="112"/>
        <end position="127"/>
    </location>
</feature>
<feature type="binding site" evidence="1">
    <location>
        <position position="170"/>
    </location>
    <ligand>
        <name>ATP</name>
        <dbReference type="ChEBI" id="CHEBI:30616"/>
    </ligand>
</feature>
<feature type="binding site" evidence="1">
    <location>
        <position position="172"/>
    </location>
    <ligand>
        <name>ATP</name>
        <dbReference type="ChEBI" id="CHEBI:30616"/>
    </ligand>
</feature>
<feature type="binding site" evidence="1">
    <location>
        <position position="173"/>
    </location>
    <ligand>
        <name>ATP</name>
        <dbReference type="ChEBI" id="CHEBI:30616"/>
    </ligand>
</feature>
<feature type="binding site" evidence="1">
    <location>
        <position position="174"/>
    </location>
    <ligand>
        <name>ATP</name>
        <dbReference type="ChEBI" id="CHEBI:30616"/>
    </ligand>
</feature>
<evidence type="ECO:0000255" key="1">
    <source>
        <dbReference type="HAMAP-Rule" id="MF_00377"/>
    </source>
</evidence>
<evidence type="ECO:0000256" key="2">
    <source>
        <dbReference type="SAM" id="MobiDB-lite"/>
    </source>
</evidence>
<keyword id="KW-0067">ATP-binding</keyword>
<keyword id="KW-0963">Cytoplasm</keyword>
<keyword id="KW-0235">DNA replication</keyword>
<keyword id="KW-0238">DNA-binding</keyword>
<keyword id="KW-0446">Lipid-binding</keyword>
<keyword id="KW-0547">Nucleotide-binding</keyword>